<comment type="function">
    <text evidence="8 9">Transmembrane serine/threonine kinase activin type-1 receptor forming an activin receptor complex with activin receptor type-2 (ACVR2A or ACVR2B). Transduces the activin signal from the cell surface to the cytoplasm and is thus regulating a many physiological and pathological processes including neuronal differentiation and neuronal survival, hair follicle development and cycling, FSH production by the pituitary gland, wound healing, extracellular matrix production, immunosuppression and carcinogenesis. Activin is also thought to have a paracrine or autocrine role in follicular development in the ovary. Within the receptor complex, type-2 receptors (ACVR2A and/or ACVR2B) act as a primary activin receptors whereas the type-1 receptors like ACVR1B act as downstream transducers of activin signals. Activin binds to type-2 receptor at the plasma membrane and activates its serine-threonine kinase. The activated receptor type-2 then phosphorylates and activates the type-1 receptor such as ACVR1B. Once activated, the type-1 receptor binds and phosphorylates the SMAD proteins SMAD2 and SMAD3, on serine residues of the C-terminal tail. Soon after their association with the activin receptor and subsequent phosphorylation, SMAD2 and SMAD3 are released into the cytoplasm where they interact with the common partner SMAD4. This SMAD complex translocates into the nucleus where it mediates activin-induced transcription. Inhibitory SMAD7, which is recruited to ACVR1B through FKBP1A, can prevent the association of SMAD2 and SMAD3 with the activin receptor complex, thereby blocking the activin signal. Activin signal transduction is also antagonized by the binding to the receptor of inhibin-B via the IGSF1 inhibin coreceptor. ACVR1B also phosphorylates TDP2.</text>
</comment>
<comment type="catalytic activity">
    <reaction>
        <text>L-threonyl-[receptor-protein] + ATP = O-phospho-L-threonyl-[receptor-protein] + ADP + H(+)</text>
        <dbReference type="Rhea" id="RHEA:44880"/>
        <dbReference type="Rhea" id="RHEA-COMP:11024"/>
        <dbReference type="Rhea" id="RHEA-COMP:11025"/>
        <dbReference type="ChEBI" id="CHEBI:15378"/>
        <dbReference type="ChEBI" id="CHEBI:30013"/>
        <dbReference type="ChEBI" id="CHEBI:30616"/>
        <dbReference type="ChEBI" id="CHEBI:61977"/>
        <dbReference type="ChEBI" id="CHEBI:456216"/>
        <dbReference type="EC" id="2.7.11.30"/>
    </reaction>
</comment>
<comment type="catalytic activity">
    <reaction>
        <text>L-seryl-[receptor-protein] + ATP = O-phospho-L-seryl-[receptor-protein] + ADP + H(+)</text>
        <dbReference type="Rhea" id="RHEA:18673"/>
        <dbReference type="Rhea" id="RHEA-COMP:11022"/>
        <dbReference type="Rhea" id="RHEA-COMP:11023"/>
        <dbReference type="ChEBI" id="CHEBI:15378"/>
        <dbReference type="ChEBI" id="CHEBI:29999"/>
        <dbReference type="ChEBI" id="CHEBI:30616"/>
        <dbReference type="ChEBI" id="CHEBI:83421"/>
        <dbReference type="ChEBI" id="CHEBI:456216"/>
        <dbReference type="EC" id="2.7.11.30"/>
    </reaction>
</comment>
<comment type="activity regulation">
    <text evidence="1">Activin receptor type-2 (ACVR2A or ACVR2B) activates the type-1 receptor through phosphorylation of its regulatory GS domain.</text>
</comment>
<comment type="subunit">
    <text evidence="2 7 9">Forms an activin receptor complex with activin receptor type-2 (ACVR2A or ACVR2B) (By similarity). Part of a complex consisting of MAGI2/ARIP1, ACVR2A, ACVR1B and SMAD3 (PubMed:10681527). Interacts with SMAD2 and SMAD3 (By similarity). Interacts with SMAD7 (By similarity). Interacts with FKBP1A (By similarity). Interacts with IGSF1 (By similarity). Interacts with CRIPTO (By similarity). Interacts with TDP2 (PubMed:18039968). Interacts with TSC22D1/TSC-22 (By similarity).</text>
</comment>
<comment type="subcellular location">
    <subcellularLocation>
        <location evidence="1">Cell membrane</location>
        <topology evidence="1">Single-pass type I membrane protein</topology>
    </subcellularLocation>
</comment>
<comment type="domain">
    <text evidence="1">The GS domain is a 30-amino-acid sequence adjacent to the N-terminal boundary of the kinase domain and highly conserved in all other known type-1 receptors but not in type-2 receptors. The GS domain is the site of activation through phosphorylation by the II receptors (By similarity).</text>
</comment>
<comment type="PTM">
    <text evidence="1">Autophosphorylated. Phosphorylated by activin receptor type-2 (ACVR2A or ACVR2B) in response to activin-binding at serine and threonine residues in the GS domain. Phosphorylation of ACVR1B by activin receptor type-2 regulates association with SMAD7 (By similarity).</text>
</comment>
<comment type="PTM">
    <text evidence="1">Ubiquitinated. Level of ubiquitination is regulated by the SMAD7-SMURF1 complex (By similarity).</text>
</comment>
<comment type="PTM">
    <text evidence="1">Ubiquitinated.</text>
</comment>
<comment type="disruption phenotype">
    <text evidence="10">Leads to hair loss.</text>
</comment>
<comment type="similarity">
    <text evidence="11">Belongs to the protein kinase superfamily. TKL Ser/Thr protein kinase family. TGFB receptor subfamily.</text>
</comment>
<protein>
    <recommendedName>
        <fullName>Activin receptor type-1B</fullName>
        <ecNumber>2.7.11.30</ecNumber>
    </recommendedName>
    <alternativeName>
        <fullName>Activin receptor type IB</fullName>
        <shortName>ACTR-IB</shortName>
    </alternativeName>
    <alternativeName>
        <fullName>Activin receptor-like kinase 4</fullName>
        <shortName>ALK-4</shortName>
    </alternativeName>
    <alternativeName>
        <fullName>Serine/threonine-protein kinase receptor R2</fullName>
        <shortName>SKR2</shortName>
    </alternativeName>
</protein>
<keyword id="KW-0067">ATP-binding</keyword>
<keyword id="KW-1003">Cell membrane</keyword>
<keyword id="KW-0325">Glycoprotein</keyword>
<keyword id="KW-0418">Kinase</keyword>
<keyword id="KW-0460">Magnesium</keyword>
<keyword id="KW-0464">Manganese</keyword>
<keyword id="KW-0472">Membrane</keyword>
<keyword id="KW-0479">Metal-binding</keyword>
<keyword id="KW-0547">Nucleotide-binding</keyword>
<keyword id="KW-0597">Phosphoprotein</keyword>
<keyword id="KW-0675">Receptor</keyword>
<keyword id="KW-1185">Reference proteome</keyword>
<keyword id="KW-0723">Serine/threonine-protein kinase</keyword>
<keyword id="KW-0732">Signal</keyword>
<keyword id="KW-0808">Transferase</keyword>
<keyword id="KW-0812">Transmembrane</keyword>
<keyword id="KW-1133">Transmembrane helix</keyword>
<keyword id="KW-0832">Ubl conjugation</keyword>
<name>ACV1B_MOUSE</name>
<organism>
    <name type="scientific">Mus musculus</name>
    <name type="common">Mouse</name>
    <dbReference type="NCBI Taxonomy" id="10090"/>
    <lineage>
        <taxon>Eukaryota</taxon>
        <taxon>Metazoa</taxon>
        <taxon>Chordata</taxon>
        <taxon>Craniata</taxon>
        <taxon>Vertebrata</taxon>
        <taxon>Euteleostomi</taxon>
        <taxon>Mammalia</taxon>
        <taxon>Eutheria</taxon>
        <taxon>Euarchontoglires</taxon>
        <taxon>Glires</taxon>
        <taxon>Rodentia</taxon>
        <taxon>Myomorpha</taxon>
        <taxon>Muroidea</taxon>
        <taxon>Muridae</taxon>
        <taxon>Murinae</taxon>
        <taxon>Mus</taxon>
        <taxon>Mus</taxon>
    </lineage>
</organism>
<reference key="1">
    <citation type="journal article" date="1995" name="Mech. Dev.">
        <title>Expression of type I and type IB receptors for activin in midgestation mouse embryos suggests distinct functions in organogensis.</title>
        <authorList>
            <person name="Verschuern K."/>
            <person name="Dewulf N."/>
            <person name="Goumans M.J."/>
            <person name="Lonnoy O."/>
            <person name="Freijen A."/>
            <person name="Grimsby S."/>
            <person name="Vande Spiegle K."/>
            <person name="ten Dijke P."/>
            <person name="Moren A."/>
            <person name="Vanscheeuwijck P."/>
            <person name="Heldin C.H."/>
            <person name="Miyazono K."/>
            <person name="Mummery C."/>
            <person name="Van Den Eijnden-Van Raaij J."/>
            <person name="Huylebroeck D."/>
        </authorList>
    </citation>
    <scope>NUCLEOTIDE SEQUENCE [MRNA]</scope>
    <source>
        <strain>NIH Swiss</strain>
        <tissue>Placenta</tissue>
    </source>
</reference>
<reference key="2">
    <citation type="journal article" date="2000" name="J. Biol. Chem.">
        <title>Identification and characterization of a PDZ protein that interacts with activin types II receptors.</title>
        <authorList>
            <person name="Shoji H."/>
            <person name="Tsuchida K."/>
            <person name="Kishi H."/>
            <person name="Yamakawa N."/>
            <person name="Matsuzaki T."/>
            <person name="Liu Z."/>
            <person name="Nakamura T."/>
            <person name="Sugino H."/>
        </authorList>
    </citation>
    <scope>IDENTIFICATION IN A COMPLEX WITH MAGI2; ACVR2A; ACVR1B AND SMAD3</scope>
</reference>
<reference key="3">
    <citation type="journal article" date="2006" name="J. Biol. Chem.">
        <title>Transgenic mice expressing dominant-negative activin receptor IB in forebrain neurons reveal novel functions of activin at glutamatergic synapses.</title>
        <authorList>
            <person name="Muller M.R."/>
            <person name="Zheng F."/>
            <person name="Werner S."/>
            <person name="Alzheimer C."/>
        </authorList>
    </citation>
    <scope>FUNCTION</scope>
</reference>
<reference key="4">
    <citation type="journal article" date="2007" name="Development">
        <title>Ttrap is an essential modulator of Smad3-dependent Nodal signaling during zebrafish gastrulation and left-right axis determination.</title>
        <authorList>
            <person name="Esguerra C.V."/>
            <person name="Nelles L."/>
            <person name="Vermeire L."/>
            <person name="Ibrahimi A."/>
            <person name="Crawford A.D."/>
            <person name="Derua R."/>
            <person name="Janssens E."/>
            <person name="Waelkens E."/>
            <person name="Carmeliet P."/>
            <person name="Collen D."/>
            <person name="Huylebroeck D."/>
        </authorList>
    </citation>
    <scope>FUNCTION</scope>
    <scope>INTERACTION WITH TDP2</scope>
</reference>
<reference key="5">
    <citation type="journal article" date="2011" name="J. Invest. Dermatol.">
        <title>Conditional activin receptor type 1B (Acvr1b) knockout mice reveal hair loss abnormality.</title>
        <authorList>
            <person name="Qiu W."/>
            <person name="Li X."/>
            <person name="Tang H."/>
            <person name="Huang A.S."/>
            <person name="Panteleyev A.A."/>
            <person name="Owens D.M."/>
            <person name="Su G.H."/>
        </authorList>
    </citation>
    <scope>DISRUPTION PHENOTYPE</scope>
</reference>
<proteinExistence type="evidence at protein level"/>
<gene>
    <name type="primary">Acvr1b</name>
    <name type="synonym">Alk4</name>
</gene>
<sequence length="505" mass="56700">MAESAGASSFFPLVVLLLAGSGGSGPRGIQALLCACTSCLQTNYTCETDGACMVSIFNLDGVEHHVRTCIPKVELVPAGKPFYCLSSEDLRNTHCCYIDFCNKIDLRVPSGHLKEPAHPSMWGPVELVGIIAGPVFLLFLIIIIVFLVINYHQRVYHNRQRLDMEDPSCEMCLSKDKTLQDLVYDLSTSGSGSGLPLFVQRTVARTIVLQEIIGKGRFGEVWRGRWRGGDVAVKIFSSREERSWFREAEIYQTVMLRHENILGFIAADNKDNGTWTQLWLVSDYHEHGSLFDYLNRYTVTIEGMIKLALSAASGLAHLHMEIVGTQGKPGIAHRDLKSKNILVKKNGMCAIADLGLAVRHDAVTDTIDIAPNQRVGTKRYMAPEVLDETINMKHFDSFKCADIYALGLVYWEIARRCNSGGVHEDYQLPYYDLVPSDPSIEEMRKVVCDQKLRPNVPNWWQSYEALRVMGKMMRECWYANGAARLTALRIKKTLSQLSVQEDVKI</sequence>
<accession>Q61271</accession>
<feature type="signal peptide" evidence="3">
    <location>
        <begin position="1"/>
        <end position="23"/>
    </location>
</feature>
<feature type="chain" id="PRO_0000024418" description="Activin receptor type-1B">
    <location>
        <begin position="24"/>
        <end position="505"/>
    </location>
</feature>
<feature type="topological domain" description="Extracellular" evidence="3">
    <location>
        <begin position="24"/>
        <end position="126"/>
    </location>
</feature>
<feature type="transmembrane region" description="Helical" evidence="3">
    <location>
        <begin position="127"/>
        <end position="149"/>
    </location>
</feature>
<feature type="topological domain" description="Cytoplasmic" evidence="3">
    <location>
        <begin position="150"/>
        <end position="505"/>
    </location>
</feature>
<feature type="domain" description="GS" evidence="5">
    <location>
        <begin position="177"/>
        <end position="206"/>
    </location>
</feature>
<feature type="domain" description="Protein kinase" evidence="4">
    <location>
        <begin position="207"/>
        <end position="497"/>
    </location>
</feature>
<feature type="active site" description="Proton acceptor" evidence="4 6">
    <location>
        <position position="335"/>
    </location>
</feature>
<feature type="binding site" evidence="4">
    <location>
        <begin position="213"/>
        <end position="221"/>
    </location>
    <ligand>
        <name>ATP</name>
        <dbReference type="ChEBI" id="CHEBI:30616"/>
    </ligand>
</feature>
<feature type="binding site" evidence="4">
    <location>
        <position position="234"/>
    </location>
    <ligand>
        <name>ATP</name>
        <dbReference type="ChEBI" id="CHEBI:30616"/>
    </ligand>
</feature>
<feature type="modified residue" description="Phosphotyrosine" evidence="2">
    <location>
        <position position="380"/>
    </location>
</feature>
<feature type="glycosylation site" description="N-linked (GlcNAc...) asparagine" evidence="3">
    <location>
        <position position="43"/>
    </location>
</feature>
<dbReference type="EC" id="2.7.11.30"/>
<dbReference type="EMBL" id="Z31663">
    <property type="protein sequence ID" value="CAA83483.1"/>
    <property type="molecule type" value="mRNA"/>
</dbReference>
<dbReference type="CCDS" id="CCDS27846.1"/>
<dbReference type="RefSeq" id="NP_031421.1">
    <property type="nucleotide sequence ID" value="NM_007395.4"/>
</dbReference>
<dbReference type="SMR" id="Q61271"/>
<dbReference type="BioGRID" id="197954">
    <property type="interactions" value="8"/>
</dbReference>
<dbReference type="CORUM" id="Q61271"/>
<dbReference type="FunCoup" id="Q61271">
    <property type="interactions" value="1285"/>
</dbReference>
<dbReference type="IntAct" id="Q61271">
    <property type="interactions" value="2"/>
</dbReference>
<dbReference type="MINT" id="Q61271"/>
<dbReference type="STRING" id="10090.ENSMUSP00000000544"/>
<dbReference type="BindingDB" id="Q61271"/>
<dbReference type="GlyCosmos" id="Q61271">
    <property type="glycosylation" value="1 site, No reported glycans"/>
</dbReference>
<dbReference type="GlyGen" id="Q61271">
    <property type="glycosylation" value="1 site"/>
</dbReference>
<dbReference type="iPTMnet" id="Q61271"/>
<dbReference type="PhosphoSitePlus" id="Q61271"/>
<dbReference type="PaxDb" id="10090-ENSMUSP00000000544"/>
<dbReference type="ProteomicsDB" id="281931"/>
<dbReference type="Antibodypedia" id="14450">
    <property type="antibodies" value="540 antibodies from 37 providers"/>
</dbReference>
<dbReference type="DNASU" id="11479"/>
<dbReference type="Ensembl" id="ENSMUST00000000544.12">
    <property type="protein sequence ID" value="ENSMUSP00000000544.10"/>
    <property type="gene ID" value="ENSMUSG00000000532.12"/>
</dbReference>
<dbReference type="GeneID" id="11479"/>
<dbReference type="KEGG" id="mmu:11479"/>
<dbReference type="UCSC" id="uc007xsr.1">
    <property type="organism name" value="mouse"/>
</dbReference>
<dbReference type="AGR" id="MGI:1338944"/>
<dbReference type="CTD" id="91"/>
<dbReference type="MGI" id="MGI:1338944">
    <property type="gene designation" value="Acvr1b"/>
</dbReference>
<dbReference type="VEuPathDB" id="HostDB:ENSMUSG00000000532"/>
<dbReference type="eggNOG" id="KOG2052">
    <property type="taxonomic scope" value="Eukaryota"/>
</dbReference>
<dbReference type="GeneTree" id="ENSGT00940000157032"/>
<dbReference type="HOGENOM" id="CLU_000288_8_1_1"/>
<dbReference type="InParanoid" id="Q61271"/>
<dbReference type="OMA" id="HVRNTHC"/>
<dbReference type="OrthoDB" id="69842at2759"/>
<dbReference type="PhylomeDB" id="Q61271"/>
<dbReference type="TreeFam" id="TF314724"/>
<dbReference type="Reactome" id="R-MMU-1502540">
    <property type="pathway name" value="Signaling by Activin"/>
</dbReference>
<dbReference type="BioGRID-ORCS" id="11479">
    <property type="hits" value="4 hits in 81 CRISPR screens"/>
</dbReference>
<dbReference type="ChiTaRS" id="Acvr1b">
    <property type="organism name" value="mouse"/>
</dbReference>
<dbReference type="PRO" id="PR:Q61271"/>
<dbReference type="Proteomes" id="UP000000589">
    <property type="component" value="Chromosome 15"/>
</dbReference>
<dbReference type="RNAct" id="Q61271">
    <property type="molecule type" value="protein"/>
</dbReference>
<dbReference type="Bgee" id="ENSMUSG00000000532">
    <property type="expression patterns" value="Expressed in urinary bladder urothelium and 275 other cell types or tissues"/>
</dbReference>
<dbReference type="ExpressionAtlas" id="Q61271">
    <property type="expression patterns" value="baseline and differential"/>
</dbReference>
<dbReference type="GO" id="GO:0048179">
    <property type="term" value="C:activin receptor complex"/>
    <property type="evidence" value="ECO:0007669"/>
    <property type="project" value="Ensembl"/>
</dbReference>
<dbReference type="GO" id="GO:0009986">
    <property type="term" value="C:cell surface"/>
    <property type="evidence" value="ECO:0007669"/>
    <property type="project" value="Ensembl"/>
</dbReference>
<dbReference type="GO" id="GO:0005886">
    <property type="term" value="C:plasma membrane"/>
    <property type="evidence" value="ECO:0000304"/>
    <property type="project" value="MGI"/>
</dbReference>
<dbReference type="GO" id="GO:0048185">
    <property type="term" value="F:activin binding"/>
    <property type="evidence" value="ECO:0000353"/>
    <property type="project" value="MGI"/>
</dbReference>
<dbReference type="GO" id="GO:0016361">
    <property type="term" value="F:activin receptor activity, type I"/>
    <property type="evidence" value="ECO:0007669"/>
    <property type="project" value="Ensembl"/>
</dbReference>
<dbReference type="GO" id="GO:0005524">
    <property type="term" value="F:ATP binding"/>
    <property type="evidence" value="ECO:0007669"/>
    <property type="project" value="UniProtKB-KW"/>
</dbReference>
<dbReference type="GO" id="GO:0019838">
    <property type="term" value="F:growth factor binding"/>
    <property type="evidence" value="ECO:0007669"/>
    <property type="project" value="Ensembl"/>
</dbReference>
<dbReference type="GO" id="GO:0070411">
    <property type="term" value="F:I-SMAD binding"/>
    <property type="evidence" value="ECO:0007669"/>
    <property type="project" value="Ensembl"/>
</dbReference>
<dbReference type="GO" id="GO:0034711">
    <property type="term" value="F:inhibin binding"/>
    <property type="evidence" value="ECO:0007669"/>
    <property type="project" value="Ensembl"/>
</dbReference>
<dbReference type="GO" id="GO:0046872">
    <property type="term" value="F:metal ion binding"/>
    <property type="evidence" value="ECO:0007669"/>
    <property type="project" value="UniProtKB-KW"/>
</dbReference>
<dbReference type="GO" id="GO:0004674">
    <property type="term" value="F:protein serine/threonine kinase activity"/>
    <property type="evidence" value="ECO:0000314"/>
    <property type="project" value="UniProtKB"/>
</dbReference>
<dbReference type="GO" id="GO:0004675">
    <property type="term" value="F:transmembrane receptor protein serine/threonine kinase activity"/>
    <property type="evidence" value="ECO:0000304"/>
    <property type="project" value="MGI"/>
</dbReference>
<dbReference type="GO" id="GO:0031625">
    <property type="term" value="F:ubiquitin protein ligase binding"/>
    <property type="evidence" value="ECO:0007669"/>
    <property type="project" value="Ensembl"/>
</dbReference>
<dbReference type="GO" id="GO:0032924">
    <property type="term" value="P:activin receptor signaling pathway"/>
    <property type="evidence" value="ECO:0000314"/>
    <property type="project" value="MGI"/>
</dbReference>
<dbReference type="GO" id="GO:0007166">
    <property type="term" value="P:cell surface receptor signaling pathway"/>
    <property type="evidence" value="ECO:0000304"/>
    <property type="project" value="MGI"/>
</dbReference>
<dbReference type="GO" id="GO:0097191">
    <property type="term" value="P:extrinsic apoptotic signaling pathway"/>
    <property type="evidence" value="ECO:0007669"/>
    <property type="project" value="Ensembl"/>
</dbReference>
<dbReference type="GO" id="GO:0000082">
    <property type="term" value="P:G1/S transition of mitotic cell cycle"/>
    <property type="evidence" value="ECO:0007669"/>
    <property type="project" value="Ensembl"/>
</dbReference>
<dbReference type="GO" id="GO:0001942">
    <property type="term" value="P:hair follicle development"/>
    <property type="evidence" value="ECO:0000315"/>
    <property type="project" value="MGI"/>
</dbReference>
<dbReference type="GO" id="GO:0001701">
    <property type="term" value="P:in utero embryonic development"/>
    <property type="evidence" value="ECO:0000315"/>
    <property type="project" value="MGI"/>
</dbReference>
<dbReference type="GO" id="GO:0007498">
    <property type="term" value="P:mesoderm development"/>
    <property type="evidence" value="ECO:0000266"/>
    <property type="project" value="MGI"/>
</dbReference>
<dbReference type="GO" id="GO:0030308">
    <property type="term" value="P:negative regulation of cell growth"/>
    <property type="evidence" value="ECO:0007669"/>
    <property type="project" value="Ensembl"/>
</dbReference>
<dbReference type="GO" id="GO:0010629">
    <property type="term" value="P:negative regulation of gene expression"/>
    <property type="evidence" value="ECO:0000315"/>
    <property type="project" value="MGI"/>
</dbReference>
<dbReference type="GO" id="GO:0030279">
    <property type="term" value="P:negative regulation of ossification"/>
    <property type="evidence" value="ECO:0007669"/>
    <property type="project" value="Ensembl"/>
</dbReference>
<dbReference type="GO" id="GO:0038092">
    <property type="term" value="P:nodal signaling pathway"/>
    <property type="evidence" value="ECO:0007669"/>
    <property type="project" value="Ensembl"/>
</dbReference>
<dbReference type="GO" id="GO:0018107">
    <property type="term" value="P:peptidyl-threonine phosphorylation"/>
    <property type="evidence" value="ECO:0000314"/>
    <property type="project" value="UniProtKB"/>
</dbReference>
<dbReference type="GO" id="GO:0032927">
    <property type="term" value="P:positive regulation of activin receptor signaling pathway"/>
    <property type="evidence" value="ECO:0007669"/>
    <property type="project" value="Ensembl"/>
</dbReference>
<dbReference type="GO" id="GO:0045648">
    <property type="term" value="P:positive regulation of erythrocyte differentiation"/>
    <property type="evidence" value="ECO:0007669"/>
    <property type="project" value="Ensembl"/>
</dbReference>
<dbReference type="GO" id="GO:0010628">
    <property type="term" value="P:positive regulation of gene expression"/>
    <property type="evidence" value="ECO:0000315"/>
    <property type="project" value="MGI"/>
</dbReference>
<dbReference type="GO" id="GO:1901165">
    <property type="term" value="P:positive regulation of trophoblast cell migration"/>
    <property type="evidence" value="ECO:0007669"/>
    <property type="project" value="Ensembl"/>
</dbReference>
<dbReference type="GO" id="GO:0006355">
    <property type="term" value="P:regulation of DNA-templated transcription"/>
    <property type="evidence" value="ECO:0007669"/>
    <property type="project" value="Ensembl"/>
</dbReference>
<dbReference type="GO" id="GO:0009966">
    <property type="term" value="P:regulation of signal transduction"/>
    <property type="evidence" value="ECO:0000314"/>
    <property type="project" value="MGI"/>
</dbReference>
<dbReference type="CDD" id="cd14143">
    <property type="entry name" value="STKc_TGFbR1_ACVR1b_ACVR1c"/>
    <property type="match status" value="1"/>
</dbReference>
<dbReference type="CDD" id="cd23536">
    <property type="entry name" value="TFP_LU_ECD_ALK4"/>
    <property type="match status" value="1"/>
</dbReference>
<dbReference type="FunFam" id="1.10.510.10:FF:000045">
    <property type="entry name" value="Receptor protein serine/threonine kinase"/>
    <property type="match status" value="1"/>
</dbReference>
<dbReference type="FunFam" id="2.10.60.10:FF:000010">
    <property type="entry name" value="Receptor protein serine/threonine kinase"/>
    <property type="match status" value="1"/>
</dbReference>
<dbReference type="FunFam" id="3.30.200.20:FF:000023">
    <property type="entry name" value="Receptor protein serine/threonine kinase"/>
    <property type="match status" value="1"/>
</dbReference>
<dbReference type="Gene3D" id="2.10.60.10">
    <property type="entry name" value="CD59"/>
    <property type="match status" value="1"/>
</dbReference>
<dbReference type="Gene3D" id="3.30.200.20">
    <property type="entry name" value="Phosphorylase Kinase, domain 1"/>
    <property type="match status" value="1"/>
</dbReference>
<dbReference type="Gene3D" id="1.10.510.10">
    <property type="entry name" value="Transferase(Phosphotransferase) domain 1"/>
    <property type="match status" value="1"/>
</dbReference>
<dbReference type="InterPro" id="IPR000472">
    <property type="entry name" value="Activin_recp"/>
</dbReference>
<dbReference type="InterPro" id="IPR003605">
    <property type="entry name" value="GS_dom"/>
</dbReference>
<dbReference type="InterPro" id="IPR011009">
    <property type="entry name" value="Kinase-like_dom_sf"/>
</dbReference>
<dbReference type="InterPro" id="IPR000719">
    <property type="entry name" value="Prot_kinase_dom"/>
</dbReference>
<dbReference type="InterPro" id="IPR017441">
    <property type="entry name" value="Protein_kinase_ATP_BS"/>
</dbReference>
<dbReference type="InterPro" id="IPR008271">
    <property type="entry name" value="Ser/Thr_kinase_AS"/>
</dbReference>
<dbReference type="InterPro" id="IPR045860">
    <property type="entry name" value="Snake_toxin-like_sf"/>
</dbReference>
<dbReference type="InterPro" id="IPR000333">
    <property type="entry name" value="TGFB_receptor"/>
</dbReference>
<dbReference type="PANTHER" id="PTHR23255:SF22">
    <property type="entry name" value="ACTIVIN RECEPTOR TYPE-1B"/>
    <property type="match status" value="1"/>
</dbReference>
<dbReference type="PANTHER" id="PTHR23255">
    <property type="entry name" value="TRANSFORMING GROWTH FACTOR-BETA RECEPTOR TYPE I AND II"/>
    <property type="match status" value="1"/>
</dbReference>
<dbReference type="Pfam" id="PF01064">
    <property type="entry name" value="Activin_recp"/>
    <property type="match status" value="1"/>
</dbReference>
<dbReference type="Pfam" id="PF00069">
    <property type="entry name" value="Pkinase"/>
    <property type="match status" value="1"/>
</dbReference>
<dbReference type="Pfam" id="PF08515">
    <property type="entry name" value="TGF_beta_GS"/>
    <property type="match status" value="1"/>
</dbReference>
<dbReference type="SMART" id="SM00467">
    <property type="entry name" value="GS"/>
    <property type="match status" value="1"/>
</dbReference>
<dbReference type="SMART" id="SM00220">
    <property type="entry name" value="S_TKc"/>
    <property type="match status" value="1"/>
</dbReference>
<dbReference type="SUPFAM" id="SSF56112">
    <property type="entry name" value="Protein kinase-like (PK-like)"/>
    <property type="match status" value="1"/>
</dbReference>
<dbReference type="SUPFAM" id="SSF57302">
    <property type="entry name" value="Snake toxin-like"/>
    <property type="match status" value="1"/>
</dbReference>
<dbReference type="PROSITE" id="PS51256">
    <property type="entry name" value="GS"/>
    <property type="match status" value="1"/>
</dbReference>
<dbReference type="PROSITE" id="PS00107">
    <property type="entry name" value="PROTEIN_KINASE_ATP"/>
    <property type="match status" value="1"/>
</dbReference>
<dbReference type="PROSITE" id="PS50011">
    <property type="entry name" value="PROTEIN_KINASE_DOM"/>
    <property type="match status" value="1"/>
</dbReference>
<dbReference type="PROSITE" id="PS00108">
    <property type="entry name" value="PROTEIN_KINASE_ST"/>
    <property type="match status" value="1"/>
</dbReference>
<evidence type="ECO:0000250" key="1"/>
<evidence type="ECO:0000250" key="2">
    <source>
        <dbReference type="UniProtKB" id="P36896"/>
    </source>
</evidence>
<evidence type="ECO:0000255" key="3"/>
<evidence type="ECO:0000255" key="4">
    <source>
        <dbReference type="PROSITE-ProRule" id="PRU00159"/>
    </source>
</evidence>
<evidence type="ECO:0000255" key="5">
    <source>
        <dbReference type="PROSITE-ProRule" id="PRU00585"/>
    </source>
</evidence>
<evidence type="ECO:0000255" key="6">
    <source>
        <dbReference type="PROSITE-ProRule" id="PRU10027"/>
    </source>
</evidence>
<evidence type="ECO:0000269" key="7">
    <source>
    </source>
</evidence>
<evidence type="ECO:0000269" key="8">
    <source>
    </source>
</evidence>
<evidence type="ECO:0000269" key="9">
    <source>
    </source>
</evidence>
<evidence type="ECO:0000269" key="10">
    <source>
    </source>
</evidence>
<evidence type="ECO:0000305" key="11"/>